<reference key="1">
    <citation type="journal article" date="1998" name="Science">
        <title>Genome sequence of the nematode C. elegans: a platform for investigating biology.</title>
        <authorList>
            <consortium name="The C. elegans sequencing consortium"/>
        </authorList>
    </citation>
    <scope>NUCLEOTIDE SEQUENCE [LARGE SCALE GENOMIC DNA]</scope>
    <source>
        <strain>Bristol N2</strain>
    </source>
</reference>
<evidence type="ECO:0000255" key="1">
    <source>
        <dbReference type="PROSITE-ProRule" id="PRU00080"/>
    </source>
</evidence>
<evidence type="ECO:0000255" key="2">
    <source>
        <dbReference type="PROSITE-ProRule" id="PRU00176"/>
    </source>
</evidence>
<evidence type="ECO:0000256" key="3">
    <source>
        <dbReference type="SAM" id="MobiDB-lite"/>
    </source>
</evidence>
<evidence type="ECO:0000312" key="4">
    <source>
        <dbReference type="WormBase" id="EEED8.10a"/>
    </source>
</evidence>
<proteinExistence type="predicted"/>
<name>YQOA_CAEEL</name>
<protein>
    <recommendedName>
        <fullName>Putative RNA-binding protein EEED8.10</fullName>
    </recommendedName>
</protein>
<accession>Q09299</accession>
<accession>Q2V4U6</accession>
<accession>Q7JPI7</accession>
<accession>Q8IG36</accession>
<dbReference type="EMBL" id="FO081042">
    <property type="protein sequence ID" value="CCD68738.1"/>
    <property type="molecule type" value="Genomic_DNA"/>
</dbReference>
<dbReference type="PIR" id="T15920">
    <property type="entry name" value="T15920"/>
</dbReference>
<dbReference type="SMR" id="Q09299"/>
<dbReference type="BioGRID" id="39263">
    <property type="interactions" value="2"/>
</dbReference>
<dbReference type="FunCoup" id="Q09299">
    <property type="interactions" value="42"/>
</dbReference>
<dbReference type="STRING" id="6239.EEED8.10a.1"/>
<dbReference type="iPTMnet" id="Q09299"/>
<dbReference type="PaxDb" id="6239-EEED8.10a"/>
<dbReference type="PeptideAtlas" id="Q09299"/>
<dbReference type="EnsemblMetazoa" id="EEED8.10a.1">
    <property type="protein sequence ID" value="EEED8.10a.1"/>
    <property type="gene ID" value="WBGene00017138"/>
</dbReference>
<dbReference type="KEGG" id="cel:CELE_EEED8.10"/>
<dbReference type="UCSC" id="EEED8.10a">
    <property type="organism name" value="c. elegans"/>
</dbReference>
<dbReference type="AGR" id="WB:WBGene00017138"/>
<dbReference type="CTD" id="173919"/>
<dbReference type="WormBase" id="EEED8.10a">
    <property type="protein sequence ID" value="CE39344"/>
    <property type="gene ID" value="WBGene00017138"/>
    <property type="gene designation" value="fbxl-3"/>
</dbReference>
<dbReference type="eggNOG" id="KOG1947">
    <property type="taxonomic scope" value="Eukaryota"/>
</dbReference>
<dbReference type="GeneTree" id="ENSGT00940000155184"/>
<dbReference type="HOGENOM" id="CLU_382731_0_0_1"/>
<dbReference type="InParanoid" id="Q09299"/>
<dbReference type="OMA" id="IAFQHTS"/>
<dbReference type="OrthoDB" id="549243at2759"/>
<dbReference type="PhylomeDB" id="Q09299"/>
<dbReference type="PRO" id="PR:Q09299"/>
<dbReference type="Proteomes" id="UP000001940">
    <property type="component" value="Chromosome II"/>
</dbReference>
<dbReference type="Bgee" id="WBGene00017138">
    <property type="expression patterns" value="Expressed in pharyngeal muscle cell (C elegans) and 4 other cell types or tissues"/>
</dbReference>
<dbReference type="GO" id="GO:0019005">
    <property type="term" value="C:SCF ubiquitin ligase complex"/>
    <property type="evidence" value="ECO:0000318"/>
    <property type="project" value="GO_Central"/>
</dbReference>
<dbReference type="GO" id="GO:0003723">
    <property type="term" value="F:RNA binding"/>
    <property type="evidence" value="ECO:0007669"/>
    <property type="project" value="UniProtKB-KW"/>
</dbReference>
<dbReference type="GO" id="GO:0031146">
    <property type="term" value="P:SCF-dependent proteasomal ubiquitin-dependent protein catabolic process"/>
    <property type="evidence" value="ECO:0000318"/>
    <property type="project" value="GO_Central"/>
</dbReference>
<dbReference type="CDD" id="cd00590">
    <property type="entry name" value="RRM_SF"/>
    <property type="match status" value="1"/>
</dbReference>
<dbReference type="FunFam" id="3.80.10.10:FF:001269">
    <property type="entry name" value="Putative RNA-binding protein EEED8.10"/>
    <property type="match status" value="1"/>
</dbReference>
<dbReference type="Gene3D" id="3.30.70.330">
    <property type="match status" value="1"/>
</dbReference>
<dbReference type="Gene3D" id="3.80.10.10">
    <property type="entry name" value="Ribonuclease Inhibitor"/>
    <property type="match status" value="2"/>
</dbReference>
<dbReference type="InterPro" id="IPR001810">
    <property type="entry name" value="F-box_dom"/>
</dbReference>
<dbReference type="InterPro" id="IPR006553">
    <property type="entry name" value="Leu-rich_rpt_Cys-con_subtyp"/>
</dbReference>
<dbReference type="InterPro" id="IPR032675">
    <property type="entry name" value="LRR_dom_sf"/>
</dbReference>
<dbReference type="InterPro" id="IPR012677">
    <property type="entry name" value="Nucleotide-bd_a/b_plait_sf"/>
</dbReference>
<dbReference type="InterPro" id="IPR035979">
    <property type="entry name" value="RBD_domain_sf"/>
</dbReference>
<dbReference type="InterPro" id="IPR000504">
    <property type="entry name" value="RRM_dom"/>
</dbReference>
<dbReference type="PANTHER" id="PTHR13318">
    <property type="entry name" value="PARTNER OF PAIRED, ISOFORM B-RELATED"/>
    <property type="match status" value="1"/>
</dbReference>
<dbReference type="Pfam" id="PF00076">
    <property type="entry name" value="RRM_1"/>
    <property type="match status" value="1"/>
</dbReference>
<dbReference type="SMART" id="SM00367">
    <property type="entry name" value="LRR_CC"/>
    <property type="match status" value="5"/>
</dbReference>
<dbReference type="SMART" id="SM00360">
    <property type="entry name" value="RRM"/>
    <property type="match status" value="1"/>
</dbReference>
<dbReference type="SUPFAM" id="SSF54928">
    <property type="entry name" value="RNA-binding domain, RBD"/>
    <property type="match status" value="1"/>
</dbReference>
<dbReference type="SUPFAM" id="SSF52047">
    <property type="entry name" value="RNI-like"/>
    <property type="match status" value="1"/>
</dbReference>
<dbReference type="PROSITE" id="PS50181">
    <property type="entry name" value="FBOX"/>
    <property type="match status" value="1"/>
</dbReference>
<dbReference type="PROSITE" id="PS50102">
    <property type="entry name" value="RRM"/>
    <property type="match status" value="1"/>
</dbReference>
<organism>
    <name type="scientific">Caenorhabditis elegans</name>
    <dbReference type="NCBI Taxonomy" id="6239"/>
    <lineage>
        <taxon>Eukaryota</taxon>
        <taxon>Metazoa</taxon>
        <taxon>Ecdysozoa</taxon>
        <taxon>Nematoda</taxon>
        <taxon>Chromadorea</taxon>
        <taxon>Rhabditida</taxon>
        <taxon>Rhabditina</taxon>
        <taxon>Rhabditomorpha</taxon>
        <taxon>Rhabditoidea</taxon>
        <taxon>Rhabditidae</taxon>
        <taxon>Peloderinae</taxon>
        <taxon>Caenorhabditis</taxon>
    </lineage>
</organism>
<gene>
    <name evidence="4" type="primary">fbxl-3</name>
    <name evidence="4" type="ORF">EEED8.10</name>
</gene>
<sequence length="738" mass="81188">MDFNRSFTSNLGSAGSAKSQQSMFKALRRLHGQNLESRGLHDMTEAFQSFVTRARFFSIGKLRRTWSHSAAEFMKYRRLLPMLLADGDAFDGGETDDFDASIAFQHTSRDDRKIVVSNISAKVTQSQLQSFFSQYGKITSCILPREEKKTSVFGTLPKHSRNCGTATITFKKSEHADRAKNANPEELKFYDQVMVVSAYVSKKRGGKGLVLSDDVGSREDTPLSRASSTQSLASGSEQSFNLGNVPDKILRRVISFLPIHETIRLERVNKKFMEESIKSWELVNKIALARETVFNKQRPMRTSHLKAILTRAGAHLRSLDVSGIVHLLDDRRALKVIATCCPNLVDLDISGTHAQAEALEELGESLSHLEQLSYRGMETTGDKAFYFLLKNCGHSLKFVDLRNSKRLHGRSFKLFGSQLESLYLDGSSKVDEMAFEDLCTSCGGLKELRINECYKITDENLSMIARRMEDLSILTLCGDGFKSLTSAGLIHISHMRNITELALDYNALVNDELLISISAGLPLLSSLSLANAGNDSSITAEGVSAIKNLKELTQLDASSLAAVNSKVLEQLGSLKKLEIIQLRNCTYLGDDGVRAKLRMPNIRHVDLSGSILVSNDSIQQFIKAFPSGPKLPPITLVVGGTAADASKLSVRGSRVVVDFSDYSTIVTMQTSQCSSSKFAIGGSASDAEGSDDEFEALTAQRSFYIDAVCGEEESPITDDGKLAEWAEKEARSLGLIKD</sequence>
<keyword id="KW-1185">Reference proteome</keyword>
<keyword id="KW-0694">RNA-binding</keyword>
<feature type="chain" id="PRO_0000065273" description="Putative RNA-binding protein EEED8.10">
    <location>
        <begin position="1"/>
        <end position="738"/>
    </location>
</feature>
<feature type="domain" description="RRM" evidence="2">
    <location>
        <begin position="112"/>
        <end position="201"/>
    </location>
</feature>
<feature type="domain" description="F-box" evidence="1">
    <location>
        <begin position="239"/>
        <end position="297"/>
    </location>
</feature>
<feature type="region of interest" description="Disordered" evidence="3">
    <location>
        <begin position="211"/>
        <end position="237"/>
    </location>
</feature>
<feature type="compositionally biased region" description="Polar residues" evidence="3">
    <location>
        <begin position="224"/>
        <end position="237"/>
    </location>
</feature>